<dbReference type="EMBL" id="D00565">
    <property type="protein sequence ID" value="BAA00440.1"/>
    <property type="molecule type" value="Genomic_DNA"/>
</dbReference>
<dbReference type="PIR" id="B43675">
    <property type="entry name" value="B43675"/>
</dbReference>
<dbReference type="SMR" id="P23987"/>
<dbReference type="KEGG" id="vg:3239021"/>
<dbReference type="GO" id="GO:0043657">
    <property type="term" value="C:host cell"/>
    <property type="evidence" value="ECO:0007669"/>
    <property type="project" value="GOC"/>
</dbReference>
<dbReference type="GO" id="GO:0042025">
    <property type="term" value="C:host cell nucleus"/>
    <property type="evidence" value="ECO:0007669"/>
    <property type="project" value="UniProtKB-SubCell"/>
</dbReference>
<dbReference type="GO" id="GO:0019028">
    <property type="term" value="C:viral capsid"/>
    <property type="evidence" value="ECO:0007669"/>
    <property type="project" value="UniProtKB-KW"/>
</dbReference>
<dbReference type="GO" id="GO:0046718">
    <property type="term" value="P:symbiont entry into host cell"/>
    <property type="evidence" value="ECO:0007669"/>
    <property type="project" value="UniProtKB-KW"/>
</dbReference>
<dbReference type="GO" id="GO:0019072">
    <property type="term" value="P:viral genome packaging"/>
    <property type="evidence" value="ECO:0007669"/>
    <property type="project" value="InterPro"/>
</dbReference>
<dbReference type="GO" id="GO:0075732">
    <property type="term" value="P:viral penetration into host nucleus"/>
    <property type="evidence" value="ECO:0007669"/>
    <property type="project" value="UniProtKB-KW"/>
</dbReference>
<dbReference type="HAMAP" id="MF_04025">
    <property type="entry name" value="HSV_CVC2"/>
    <property type="match status" value="1"/>
</dbReference>
<dbReference type="InterPro" id="IPR002493">
    <property type="entry name" value="Herpes_UL25"/>
</dbReference>
<dbReference type="Pfam" id="PF01499">
    <property type="entry name" value="Herpes_UL25"/>
    <property type="match status" value="1"/>
</dbReference>
<evidence type="ECO:0000255" key="1">
    <source>
        <dbReference type="HAMAP-Rule" id="MF_04025"/>
    </source>
</evidence>
<organism>
    <name type="scientific">Infectious laryngotracheitis virus (strain Thorne V882)</name>
    <name type="common">ILTV</name>
    <name type="synonym">Gallid herpesvirus 1</name>
    <dbReference type="NCBI Taxonomy" id="10344"/>
    <lineage>
        <taxon>Viruses</taxon>
        <taxon>Duplodnaviria</taxon>
        <taxon>Heunggongvirae</taxon>
        <taxon>Peploviricota</taxon>
        <taxon>Herviviricetes</taxon>
        <taxon>Herpesvirales</taxon>
        <taxon>Orthoherpesviridae</taxon>
        <taxon>Alphaherpesvirinae</taxon>
        <taxon>Iltovirus</taxon>
        <taxon>Iltovirus gallidalpha1</taxon>
        <taxon>Infectious laryngotracheitis virus</taxon>
    </lineage>
</organism>
<gene>
    <name evidence="1" type="primary">CVC2</name>
</gene>
<name>CVC2_ILTVT</name>
<organismHost>
    <name type="scientific">Gallus gallus</name>
    <name type="common">Chicken</name>
    <dbReference type="NCBI Taxonomy" id="9031"/>
</organismHost>
<proteinExistence type="inferred from homology"/>
<accession>P23987</accession>
<comment type="function">
    <text evidence="1">Capsid vertex-specific component that plays a role during viral DNA encapsidation, assuring correct genome cleavage and presumably stabilizing capsids that contain full-length viral genomes. Participates in the interaction between the capsid and the tegument through interaction with the large tegument protein/LTP.</text>
</comment>
<comment type="subunit">
    <text evidence="1">Heterodimerizes with CVC1. Interacts with major capsid protein/MCP and triplex capsid protein 1/TRX1 at the pentamer vertices. Interacts with the large tegument protein/LTP.</text>
</comment>
<comment type="subcellular location">
    <subcellularLocation>
        <location evidence="1">Virion</location>
    </subcellularLocation>
    <subcellularLocation>
        <location evidence="1">Host nucleus</location>
    </subcellularLocation>
</comment>
<comment type="similarity">
    <text evidence="1">Belongs to the herpesviridae CVC2 protein family.</text>
</comment>
<sequence>MFRPRFEPMNLPKDSNKPSTLMVLADRLNFISCAEGSSKYASKLFEGTLIDAEIMTNRARIEDLERRNRAAKAALEQLENMSATVPVHVSSALQTIEYPLETVIDVLDDLAQRAVQEKDIVGSYKTLDIRAPGEDVPANVIWIVKNGEPLTFNTDFQVDFLTTSFAIAGNGRLGFGSWFRALQTQLLDNNKAIARVLNVMGDTRISGRFMKTAIRALRSAMEIYAGTRQYSGFEATVLCLLHYSRSRQSASNIRHGLDVSIFEDALRHVPTYLNYMLEDIRAEWGSVTFSFDRSKLPVNFFSPIDGRKYSNGVFDPHIVYQLLKRTGTLSTTVRDITKETLLPIDPDFVRFDDPIAALSISFFPSRRTPLILHEDDPLVRTVIDSISLLLVLQKLMFNSNVYTSTHLNRFQPSAFFELPLGTQSEQEAAKWPVAPGSRPQATASTFDDNGQDMASRDNNLFFLFEKYVVPMYRYDNRCEVTGFFPGLAALCITGRVKGIPTAVRLGEYYSSLCNLIELDLRKTSHVGSGAAAVLAVHDSLTGDVEEGVSRLLEVFDAKKAFERNIEDIQRGV</sequence>
<reference key="1">
    <citation type="journal article" date="1990" name="J. Gen. Virol.">
        <title>Analysis of the nucleotide sequence of DNA from the region of the thymidine kinase gene of infectious laryngotracheitis virus; potential evolutionary relationships between the herpesvirus subfamilies.</title>
        <authorList>
            <person name="Griffin A.M."/>
            <person name="Boursnell M.E."/>
        </authorList>
    </citation>
    <scope>NUCLEOTIDE SEQUENCE [GENOMIC DNA]</scope>
</reference>
<keyword id="KW-0167">Capsid protein</keyword>
<keyword id="KW-1048">Host nucleus</keyword>
<keyword id="KW-0945">Host-virus interaction</keyword>
<keyword id="KW-0231">Viral genome packaging</keyword>
<keyword id="KW-1163">Viral penetration into host nucleus</keyword>
<keyword id="KW-1188">Viral release from host cell</keyword>
<keyword id="KW-0946">Virion</keyword>
<keyword id="KW-1160">Virus entry into host cell</keyword>
<feature type="chain" id="PRO_0000116004" description="Capsid vertex component 2">
    <location>
        <begin position="1"/>
        <end position="572"/>
    </location>
</feature>
<feature type="region of interest" description="Interaction with major capsid protein/MCP" evidence="1">
    <location>
        <begin position="1"/>
        <end position="58"/>
    </location>
</feature>
<protein>
    <recommendedName>
        <fullName evidence="1">Capsid vertex component 2</fullName>
    </recommendedName>
</protein>